<reference evidence="4" key="1">
    <citation type="journal article" date="2000" name="Science">
        <title>The genome sequence of Drosophila melanogaster.</title>
        <authorList>
            <person name="Adams M.D."/>
            <person name="Celniker S.E."/>
            <person name="Holt R.A."/>
            <person name="Evans C.A."/>
            <person name="Gocayne J.D."/>
            <person name="Amanatides P.G."/>
            <person name="Scherer S.E."/>
            <person name="Li P.W."/>
            <person name="Hoskins R.A."/>
            <person name="Galle R.F."/>
            <person name="George R.A."/>
            <person name="Lewis S.E."/>
            <person name="Richards S."/>
            <person name="Ashburner M."/>
            <person name="Henderson S.N."/>
            <person name="Sutton G.G."/>
            <person name="Wortman J.R."/>
            <person name="Yandell M.D."/>
            <person name="Zhang Q."/>
            <person name="Chen L.X."/>
            <person name="Brandon R.C."/>
            <person name="Rogers Y.-H.C."/>
            <person name="Blazej R.G."/>
            <person name="Champe M."/>
            <person name="Pfeiffer B.D."/>
            <person name="Wan K.H."/>
            <person name="Doyle C."/>
            <person name="Baxter E.G."/>
            <person name="Helt G."/>
            <person name="Nelson C.R."/>
            <person name="Miklos G.L.G."/>
            <person name="Abril J.F."/>
            <person name="Agbayani A."/>
            <person name="An H.-J."/>
            <person name="Andrews-Pfannkoch C."/>
            <person name="Baldwin D."/>
            <person name="Ballew R.M."/>
            <person name="Basu A."/>
            <person name="Baxendale J."/>
            <person name="Bayraktaroglu L."/>
            <person name="Beasley E.M."/>
            <person name="Beeson K.Y."/>
            <person name="Benos P.V."/>
            <person name="Berman B.P."/>
            <person name="Bhandari D."/>
            <person name="Bolshakov S."/>
            <person name="Borkova D."/>
            <person name="Botchan M.R."/>
            <person name="Bouck J."/>
            <person name="Brokstein P."/>
            <person name="Brottier P."/>
            <person name="Burtis K.C."/>
            <person name="Busam D.A."/>
            <person name="Butler H."/>
            <person name="Cadieu E."/>
            <person name="Center A."/>
            <person name="Chandra I."/>
            <person name="Cherry J.M."/>
            <person name="Cawley S."/>
            <person name="Dahlke C."/>
            <person name="Davenport L.B."/>
            <person name="Davies P."/>
            <person name="de Pablos B."/>
            <person name="Delcher A."/>
            <person name="Deng Z."/>
            <person name="Mays A.D."/>
            <person name="Dew I."/>
            <person name="Dietz S.M."/>
            <person name="Dodson K."/>
            <person name="Doup L.E."/>
            <person name="Downes M."/>
            <person name="Dugan-Rocha S."/>
            <person name="Dunkov B.C."/>
            <person name="Dunn P."/>
            <person name="Durbin K.J."/>
            <person name="Evangelista C.C."/>
            <person name="Ferraz C."/>
            <person name="Ferriera S."/>
            <person name="Fleischmann W."/>
            <person name="Fosler C."/>
            <person name="Gabrielian A.E."/>
            <person name="Garg N.S."/>
            <person name="Gelbart W.M."/>
            <person name="Glasser K."/>
            <person name="Glodek A."/>
            <person name="Gong F."/>
            <person name="Gorrell J.H."/>
            <person name="Gu Z."/>
            <person name="Guan P."/>
            <person name="Harris M."/>
            <person name="Harris N.L."/>
            <person name="Harvey D.A."/>
            <person name="Heiman T.J."/>
            <person name="Hernandez J.R."/>
            <person name="Houck J."/>
            <person name="Hostin D."/>
            <person name="Houston K.A."/>
            <person name="Howland T.J."/>
            <person name="Wei M.-H."/>
            <person name="Ibegwam C."/>
            <person name="Jalali M."/>
            <person name="Kalush F."/>
            <person name="Karpen G.H."/>
            <person name="Ke Z."/>
            <person name="Kennison J.A."/>
            <person name="Ketchum K.A."/>
            <person name="Kimmel B.E."/>
            <person name="Kodira C.D."/>
            <person name="Kraft C.L."/>
            <person name="Kravitz S."/>
            <person name="Kulp D."/>
            <person name="Lai Z."/>
            <person name="Lasko P."/>
            <person name="Lei Y."/>
            <person name="Levitsky A.A."/>
            <person name="Li J.H."/>
            <person name="Li Z."/>
            <person name="Liang Y."/>
            <person name="Lin X."/>
            <person name="Liu X."/>
            <person name="Mattei B."/>
            <person name="McIntosh T.C."/>
            <person name="McLeod M.P."/>
            <person name="McPherson D."/>
            <person name="Merkulov G."/>
            <person name="Milshina N.V."/>
            <person name="Mobarry C."/>
            <person name="Morris J."/>
            <person name="Moshrefi A."/>
            <person name="Mount S.M."/>
            <person name="Moy M."/>
            <person name="Murphy B."/>
            <person name="Murphy L."/>
            <person name="Muzny D.M."/>
            <person name="Nelson D.L."/>
            <person name="Nelson D.R."/>
            <person name="Nelson K.A."/>
            <person name="Nixon K."/>
            <person name="Nusskern D.R."/>
            <person name="Pacleb J.M."/>
            <person name="Palazzolo M."/>
            <person name="Pittman G.S."/>
            <person name="Pan S."/>
            <person name="Pollard J."/>
            <person name="Puri V."/>
            <person name="Reese M.G."/>
            <person name="Reinert K."/>
            <person name="Remington K."/>
            <person name="Saunders R.D.C."/>
            <person name="Scheeler F."/>
            <person name="Shen H."/>
            <person name="Shue B.C."/>
            <person name="Siden-Kiamos I."/>
            <person name="Simpson M."/>
            <person name="Skupski M.P."/>
            <person name="Smith T.J."/>
            <person name="Spier E."/>
            <person name="Spradling A.C."/>
            <person name="Stapleton M."/>
            <person name="Strong R."/>
            <person name="Sun E."/>
            <person name="Svirskas R."/>
            <person name="Tector C."/>
            <person name="Turner R."/>
            <person name="Venter E."/>
            <person name="Wang A.H."/>
            <person name="Wang X."/>
            <person name="Wang Z.-Y."/>
            <person name="Wassarman D.A."/>
            <person name="Weinstock G.M."/>
            <person name="Weissenbach J."/>
            <person name="Williams S.M."/>
            <person name="Woodage T."/>
            <person name="Worley K.C."/>
            <person name="Wu D."/>
            <person name="Yang S."/>
            <person name="Yao Q.A."/>
            <person name="Ye J."/>
            <person name="Yeh R.-F."/>
            <person name="Zaveri J.S."/>
            <person name="Zhan M."/>
            <person name="Zhang G."/>
            <person name="Zhao Q."/>
            <person name="Zheng L."/>
            <person name="Zheng X.H."/>
            <person name="Zhong F.N."/>
            <person name="Zhong W."/>
            <person name="Zhou X."/>
            <person name="Zhu S.C."/>
            <person name="Zhu X."/>
            <person name="Smith H.O."/>
            <person name="Gibbs R.A."/>
            <person name="Myers E.W."/>
            <person name="Rubin G.M."/>
            <person name="Venter J.C."/>
        </authorList>
    </citation>
    <scope>NUCLEOTIDE SEQUENCE [LARGE SCALE GENOMIC DNA]</scope>
    <source>
        <strain evidence="3">Berkeley</strain>
    </source>
</reference>
<reference evidence="4" key="2">
    <citation type="journal article" date="2002" name="Genome Biol.">
        <title>Annotation of the Drosophila melanogaster euchromatic genome: a systematic review.</title>
        <authorList>
            <person name="Misra S."/>
            <person name="Crosby M.A."/>
            <person name="Mungall C.J."/>
            <person name="Matthews B.B."/>
            <person name="Campbell K.S."/>
            <person name="Hradecky P."/>
            <person name="Huang Y."/>
            <person name="Kaminker J.S."/>
            <person name="Millburn G.H."/>
            <person name="Prochnik S.E."/>
            <person name="Smith C.D."/>
            <person name="Tupy J.L."/>
            <person name="Whitfield E.J."/>
            <person name="Bayraktaroglu L."/>
            <person name="Berman B.P."/>
            <person name="Bettencourt B.R."/>
            <person name="Celniker S.E."/>
            <person name="de Grey A.D.N.J."/>
            <person name="Drysdale R.A."/>
            <person name="Harris N.L."/>
            <person name="Richter J."/>
            <person name="Russo S."/>
            <person name="Schroeder A.J."/>
            <person name="Shu S.Q."/>
            <person name="Stapleton M."/>
            <person name="Yamada C."/>
            <person name="Ashburner M."/>
            <person name="Gelbart W.M."/>
            <person name="Rubin G.M."/>
            <person name="Lewis S.E."/>
        </authorList>
    </citation>
    <scope>GENOME REANNOTATION</scope>
    <source>
        <strain>Berkeley</strain>
    </source>
</reference>
<reference evidence="4" key="3">
    <citation type="journal article" date="2000" name="Science">
        <title>Candidate taste receptors in Drosophila.</title>
        <authorList>
            <person name="Clyne P.J."/>
            <person name="Warr C.G."/>
            <person name="Carlson J.R."/>
        </authorList>
    </citation>
    <scope>IDENTIFICATION</scope>
</reference>
<reference evidence="4" key="4">
    <citation type="journal article" date="2001" name="Curr. Biol.">
        <title>Spatially restricted expression of candidate taste receptors in the Drosophila gustatory system.</title>
        <authorList>
            <person name="Dunipace L."/>
            <person name="Meister S."/>
            <person name="McNealy C."/>
            <person name="Amrein H."/>
        </authorList>
    </citation>
    <scope>IDENTIFICATION</scope>
</reference>
<name>GR58C_DROME</name>
<evidence type="ECO:0000250" key="1"/>
<evidence type="ECO:0000255" key="2"/>
<evidence type="ECO:0000269" key="3">
    <source>
    </source>
</evidence>
<evidence type="ECO:0000305" key="4"/>
<evidence type="ECO:0000312" key="5">
    <source>
        <dbReference type="EMBL" id="AAF46780.3"/>
    </source>
</evidence>
<gene>
    <name type="primary">Gr58c</name>
    <name type="synonym">GR58A.3</name>
    <name type="ORF">CG13491</name>
</gene>
<protein>
    <recommendedName>
        <fullName>Putative gustatory receptor 58c</fullName>
    </recommendedName>
</protein>
<keyword id="KW-1003">Cell membrane</keyword>
<keyword id="KW-0325">Glycoprotein</keyword>
<keyword id="KW-0472">Membrane</keyword>
<keyword id="KW-0675">Receptor</keyword>
<keyword id="KW-1185">Reference proteome</keyword>
<keyword id="KW-0807">Transducer</keyword>
<keyword id="KW-0812">Transmembrane</keyword>
<keyword id="KW-1133">Transmembrane helix</keyword>
<sequence length="412" mass="48376">MNQYFLLHTYFQVSRLIGLCNLHYDSSNHRFILNHVPTVVYCVILNVVYLLVLPFALFVLTGNIYHCPDAGMFGVVYNVVALTKLLTMLFLMSSVWIQRRRLYKLGNDLMKMLHKFRFNLGNDCRNRCLCKGLLTSSRFVLLTQQLLTRDSVVNCESNSSLRQAMVPYQSAAIVYALIMILLMSYVDMTVYMVEVAGNWLLVNMTQGVREMVQDLEVLPERNGIPREMGLMQILAAWRKLWRRCRRLDALLKQFVDIFQWQVLFNLLTTYIFSIAVLFRLWIYLEFDKNFHLWKGILYAIIFLTHHVEIVMQFSIFEINRCKWLGLLEDVGNLWDINYSGRQCIKSSGTILSRKLEFSLLYMNRKLQLNPKRVRRLHIVGLFDLSNLTVHNMTRSIITNVLVLCQIAYKKYG</sequence>
<dbReference type="EMBL" id="AE013599">
    <property type="protein sequence ID" value="AAF46780.3"/>
    <property type="molecule type" value="Genomic_DNA"/>
</dbReference>
<dbReference type="RefSeq" id="NP_726133.2">
    <property type="nucleotide sequence ID" value="NM_166489.2"/>
</dbReference>
<dbReference type="SMR" id="Q9W2B2"/>
<dbReference type="FunCoup" id="Q9W2B2">
    <property type="interactions" value="13"/>
</dbReference>
<dbReference type="STRING" id="7227.FBpp0071643"/>
<dbReference type="GlyCosmos" id="Q9W2B2">
    <property type="glycosylation" value="5 sites, No reported glycans"/>
</dbReference>
<dbReference type="GlyGen" id="Q9W2B2">
    <property type="glycosylation" value="5 sites"/>
</dbReference>
<dbReference type="PaxDb" id="7227-FBpp0071643"/>
<dbReference type="EnsemblMetazoa" id="FBtr0071727">
    <property type="protein sequence ID" value="FBpp0071643"/>
    <property type="gene ID" value="FBgn0041237"/>
</dbReference>
<dbReference type="GeneID" id="37501"/>
<dbReference type="KEGG" id="dme:Dmel_CG13491"/>
<dbReference type="AGR" id="FB:FBgn0041237"/>
<dbReference type="CTD" id="37501"/>
<dbReference type="FlyBase" id="FBgn0041237">
    <property type="gene designation" value="Gr58c"/>
</dbReference>
<dbReference type="VEuPathDB" id="VectorBase:FBgn0041237"/>
<dbReference type="eggNOG" id="ENOG502TAE4">
    <property type="taxonomic scope" value="Eukaryota"/>
</dbReference>
<dbReference type="HOGENOM" id="CLU_667770_0_0_1"/>
<dbReference type="InParanoid" id="Q9W2B2"/>
<dbReference type="OMA" id="LRFYFEL"/>
<dbReference type="OrthoDB" id="8070166at2759"/>
<dbReference type="PhylomeDB" id="Q9W2B2"/>
<dbReference type="BioGRID-ORCS" id="37501">
    <property type="hits" value="0 hits in 1 CRISPR screen"/>
</dbReference>
<dbReference type="GenomeRNAi" id="37501"/>
<dbReference type="PRO" id="PR:Q9W2B2"/>
<dbReference type="Proteomes" id="UP000000803">
    <property type="component" value="Chromosome 2R"/>
</dbReference>
<dbReference type="GO" id="GO:0030424">
    <property type="term" value="C:axon"/>
    <property type="evidence" value="ECO:0000318"/>
    <property type="project" value="GO_Central"/>
</dbReference>
<dbReference type="GO" id="GO:0030425">
    <property type="term" value="C:dendrite"/>
    <property type="evidence" value="ECO:0000318"/>
    <property type="project" value="GO_Central"/>
</dbReference>
<dbReference type="GO" id="GO:0016020">
    <property type="term" value="C:membrane"/>
    <property type="evidence" value="ECO:0000303"/>
    <property type="project" value="UniProtKB"/>
</dbReference>
<dbReference type="GO" id="GO:0043025">
    <property type="term" value="C:neuronal cell body"/>
    <property type="evidence" value="ECO:0000318"/>
    <property type="project" value="GO_Central"/>
</dbReference>
<dbReference type="GO" id="GO:0005886">
    <property type="term" value="C:plasma membrane"/>
    <property type="evidence" value="ECO:0000250"/>
    <property type="project" value="FlyBase"/>
</dbReference>
<dbReference type="GO" id="GO:0015276">
    <property type="term" value="F:ligand-gated monoatomic ion channel activity"/>
    <property type="evidence" value="ECO:0000250"/>
    <property type="project" value="FlyBase"/>
</dbReference>
<dbReference type="GO" id="GO:0008527">
    <property type="term" value="F:taste receptor activity"/>
    <property type="evidence" value="ECO:0000303"/>
    <property type="project" value="UniProtKB"/>
</dbReference>
<dbReference type="GO" id="GO:0034220">
    <property type="term" value="P:monoatomic ion transmembrane transport"/>
    <property type="evidence" value="ECO:0000250"/>
    <property type="project" value="FlyBase"/>
</dbReference>
<dbReference type="GO" id="GO:0050909">
    <property type="term" value="P:sensory perception of taste"/>
    <property type="evidence" value="ECO:0000303"/>
    <property type="project" value="UniProtKB"/>
</dbReference>
<dbReference type="GO" id="GO:0007165">
    <property type="term" value="P:signal transduction"/>
    <property type="evidence" value="ECO:0007669"/>
    <property type="project" value="UniProtKB-KW"/>
</dbReference>
<dbReference type="InterPro" id="IPR013604">
    <property type="entry name" value="7TM_chemorcpt"/>
</dbReference>
<dbReference type="Pfam" id="PF08395">
    <property type="entry name" value="7tm_7"/>
    <property type="match status" value="1"/>
</dbReference>
<proteinExistence type="inferred from homology"/>
<comment type="function">
    <text evidence="1">Probable gustatory receptor which mediates acceptance or avoidance behavior, depending on its substrates.</text>
</comment>
<comment type="subcellular location">
    <subcellularLocation>
        <location evidence="1">Cell membrane</location>
        <topology evidence="1">Multi-pass membrane protein</topology>
    </subcellularLocation>
</comment>
<comment type="similarity">
    <text evidence="4">Belongs to the insect chemoreceptor superfamily. Gustatory receptor (GR) family. Gr10a subfamily.</text>
</comment>
<organism evidence="5">
    <name type="scientific">Drosophila melanogaster</name>
    <name type="common">Fruit fly</name>
    <dbReference type="NCBI Taxonomy" id="7227"/>
    <lineage>
        <taxon>Eukaryota</taxon>
        <taxon>Metazoa</taxon>
        <taxon>Ecdysozoa</taxon>
        <taxon>Arthropoda</taxon>
        <taxon>Hexapoda</taxon>
        <taxon>Insecta</taxon>
        <taxon>Pterygota</taxon>
        <taxon>Neoptera</taxon>
        <taxon>Endopterygota</taxon>
        <taxon>Diptera</taxon>
        <taxon>Brachycera</taxon>
        <taxon>Muscomorpha</taxon>
        <taxon>Ephydroidea</taxon>
        <taxon>Drosophilidae</taxon>
        <taxon>Drosophila</taxon>
        <taxon>Sophophora</taxon>
    </lineage>
</organism>
<accession>Q9W2B2</accession>
<feature type="chain" id="PRO_0000216520" description="Putative gustatory receptor 58c">
    <location>
        <begin position="1"/>
        <end position="412"/>
    </location>
</feature>
<feature type="transmembrane region" description="Helical" evidence="2">
    <location>
        <begin position="39"/>
        <end position="59"/>
    </location>
</feature>
<feature type="transmembrane region" description="Helical" evidence="2">
    <location>
        <begin position="72"/>
        <end position="92"/>
    </location>
</feature>
<feature type="transmembrane region" description="Helical" evidence="2">
    <location>
        <begin position="173"/>
        <end position="193"/>
    </location>
</feature>
<feature type="transmembrane region" description="Helical" evidence="2">
    <location>
        <begin position="224"/>
        <end position="241"/>
    </location>
</feature>
<feature type="transmembrane region" description="Helical" evidence="2">
    <location>
        <begin position="262"/>
        <end position="282"/>
    </location>
</feature>
<feature type="transmembrane region" description="Helical" evidence="2">
    <location>
        <begin position="296"/>
        <end position="316"/>
    </location>
</feature>
<feature type="glycosylation site" description="N-linked (GlcNAc...) asparagine" evidence="4">
    <location>
        <position position="158"/>
    </location>
</feature>
<feature type="glycosylation site" description="N-linked (GlcNAc...) asparagine" evidence="4">
    <location>
        <position position="203"/>
    </location>
</feature>
<feature type="glycosylation site" description="N-linked (GlcNAc...) asparagine" evidence="4">
    <location>
        <position position="337"/>
    </location>
</feature>
<feature type="glycosylation site" description="N-linked (GlcNAc...) asparagine" evidence="4">
    <location>
        <position position="386"/>
    </location>
</feature>
<feature type="glycosylation site" description="N-linked (GlcNAc...) asparagine" evidence="4">
    <location>
        <position position="391"/>
    </location>
</feature>